<comment type="function">
    <text evidence="1">RNA chaperone that binds small regulatory RNA (sRNAs) and mRNAs to facilitate mRNA translational regulation in response to envelope stress, environmental stress and changes in metabolite concentrations. Also binds with high specificity to tRNAs.</text>
</comment>
<comment type="subunit">
    <text evidence="1">Homohexamer.</text>
</comment>
<comment type="similarity">
    <text evidence="1">Belongs to the Hfq family.</text>
</comment>
<proteinExistence type="inferred from homology"/>
<protein>
    <recommendedName>
        <fullName evidence="1">RNA-binding protein Hfq</fullName>
    </recommendedName>
</protein>
<evidence type="ECO:0000255" key="1">
    <source>
        <dbReference type="HAMAP-Rule" id="MF_00436"/>
    </source>
</evidence>
<evidence type="ECO:0000255" key="2">
    <source>
        <dbReference type="PROSITE-ProRule" id="PRU01346"/>
    </source>
</evidence>
<organism>
    <name type="scientific">Bacillus cereus (strain Q1)</name>
    <dbReference type="NCBI Taxonomy" id="361100"/>
    <lineage>
        <taxon>Bacteria</taxon>
        <taxon>Bacillati</taxon>
        <taxon>Bacillota</taxon>
        <taxon>Bacilli</taxon>
        <taxon>Bacillales</taxon>
        <taxon>Bacillaceae</taxon>
        <taxon>Bacillus</taxon>
        <taxon>Bacillus cereus group</taxon>
    </lineage>
</organism>
<dbReference type="EMBL" id="CP000227">
    <property type="protein sequence ID" value="ACM13936.1"/>
    <property type="molecule type" value="Genomic_DNA"/>
</dbReference>
<dbReference type="SMR" id="B9IUM6"/>
<dbReference type="KEGG" id="bcq:BCQ_3508"/>
<dbReference type="HOGENOM" id="CLU_113688_3_0_9"/>
<dbReference type="Proteomes" id="UP000000441">
    <property type="component" value="Chromosome"/>
</dbReference>
<dbReference type="GO" id="GO:0005829">
    <property type="term" value="C:cytosol"/>
    <property type="evidence" value="ECO:0007669"/>
    <property type="project" value="TreeGrafter"/>
</dbReference>
<dbReference type="GO" id="GO:0003723">
    <property type="term" value="F:RNA binding"/>
    <property type="evidence" value="ECO:0007669"/>
    <property type="project" value="UniProtKB-UniRule"/>
</dbReference>
<dbReference type="GO" id="GO:0006355">
    <property type="term" value="P:regulation of DNA-templated transcription"/>
    <property type="evidence" value="ECO:0007669"/>
    <property type="project" value="InterPro"/>
</dbReference>
<dbReference type="GO" id="GO:0043487">
    <property type="term" value="P:regulation of RNA stability"/>
    <property type="evidence" value="ECO:0007669"/>
    <property type="project" value="TreeGrafter"/>
</dbReference>
<dbReference type="GO" id="GO:0045974">
    <property type="term" value="P:regulation of translation, ncRNA-mediated"/>
    <property type="evidence" value="ECO:0007669"/>
    <property type="project" value="TreeGrafter"/>
</dbReference>
<dbReference type="CDD" id="cd01716">
    <property type="entry name" value="Hfq"/>
    <property type="match status" value="1"/>
</dbReference>
<dbReference type="FunFam" id="2.30.30.100:FF:000012">
    <property type="entry name" value="RNA-binding protein Hfq"/>
    <property type="match status" value="1"/>
</dbReference>
<dbReference type="Gene3D" id="2.30.30.100">
    <property type="match status" value="1"/>
</dbReference>
<dbReference type="HAMAP" id="MF_00436">
    <property type="entry name" value="Hfq"/>
    <property type="match status" value="1"/>
</dbReference>
<dbReference type="InterPro" id="IPR005001">
    <property type="entry name" value="Hfq"/>
</dbReference>
<dbReference type="InterPro" id="IPR010920">
    <property type="entry name" value="LSM_dom_sf"/>
</dbReference>
<dbReference type="InterPro" id="IPR047575">
    <property type="entry name" value="Sm"/>
</dbReference>
<dbReference type="NCBIfam" id="TIGR02383">
    <property type="entry name" value="Hfq"/>
    <property type="match status" value="1"/>
</dbReference>
<dbReference type="NCBIfam" id="NF001602">
    <property type="entry name" value="PRK00395.1"/>
    <property type="match status" value="1"/>
</dbReference>
<dbReference type="PANTHER" id="PTHR34772">
    <property type="entry name" value="RNA-BINDING PROTEIN HFQ"/>
    <property type="match status" value="1"/>
</dbReference>
<dbReference type="PANTHER" id="PTHR34772:SF1">
    <property type="entry name" value="RNA-BINDING PROTEIN HFQ"/>
    <property type="match status" value="1"/>
</dbReference>
<dbReference type="Pfam" id="PF17209">
    <property type="entry name" value="Hfq"/>
    <property type="match status" value="1"/>
</dbReference>
<dbReference type="SUPFAM" id="SSF50182">
    <property type="entry name" value="Sm-like ribonucleoproteins"/>
    <property type="match status" value="1"/>
</dbReference>
<dbReference type="PROSITE" id="PS52002">
    <property type="entry name" value="SM"/>
    <property type="match status" value="1"/>
</dbReference>
<reference key="1">
    <citation type="journal article" date="2009" name="J. Bacteriol.">
        <title>Complete genome sequence of the extremophilic Bacillus cereus strain Q1 with industrial applications.</title>
        <authorList>
            <person name="Xiong Z."/>
            <person name="Jiang Y."/>
            <person name="Qi D."/>
            <person name="Lu H."/>
            <person name="Yang F."/>
            <person name="Yang J."/>
            <person name="Chen L."/>
            <person name="Sun L."/>
            <person name="Xu X."/>
            <person name="Xue Y."/>
            <person name="Zhu Y."/>
            <person name="Jin Q."/>
        </authorList>
    </citation>
    <scope>NUCLEOTIDE SEQUENCE [LARGE SCALE GENOMIC DNA]</scope>
    <source>
        <strain>Q1</strain>
    </source>
</reference>
<sequence>MKQSINIQDQFLNQLRKENTFVTLYLLNGFQLRGLIKGFDNFTVLLETEGKQQLIYKHAISTFVPQKNVSIELE</sequence>
<accession>B9IUM6</accession>
<feature type="chain" id="PRO_1000135020" description="RNA-binding protein Hfq">
    <location>
        <begin position="1"/>
        <end position="74"/>
    </location>
</feature>
<feature type="domain" description="Sm" evidence="2">
    <location>
        <begin position="9"/>
        <end position="69"/>
    </location>
</feature>
<gene>
    <name evidence="1" type="primary">hfq</name>
    <name type="ordered locus">BCQ_3508</name>
</gene>
<name>HFQ_BACCQ</name>
<keyword id="KW-0694">RNA-binding</keyword>
<keyword id="KW-0346">Stress response</keyword>